<comment type="function">
    <text evidence="1">Binds directly to 23S rRNA. The L1 stalk is quite mobile in the ribosome, and is involved in E site tRNA release.</text>
</comment>
<comment type="function">
    <text evidence="1">Protein L1 is also a translational repressor protein, it controls the translation of the L11 operon by binding to its mRNA.</text>
</comment>
<comment type="subunit">
    <text evidence="1">Part of the 50S ribosomal subunit.</text>
</comment>
<comment type="similarity">
    <text evidence="1">Belongs to the universal ribosomal protein uL1 family.</text>
</comment>
<dbReference type="EMBL" id="AE010300">
    <property type="protein sequence ID" value="AAN50621.1"/>
    <property type="molecule type" value="Genomic_DNA"/>
</dbReference>
<dbReference type="RefSeq" id="NP_713603.1">
    <property type="nucleotide sequence ID" value="NC_004342.2"/>
</dbReference>
<dbReference type="RefSeq" id="WP_001188789.1">
    <property type="nucleotide sequence ID" value="NC_004342.2"/>
</dbReference>
<dbReference type="SMR" id="Q8F0R9"/>
<dbReference type="FunCoup" id="Q8F0R9">
    <property type="interactions" value="574"/>
</dbReference>
<dbReference type="STRING" id="189518.LA_3423"/>
<dbReference type="PaxDb" id="189518-LA_3423"/>
<dbReference type="EnsemblBacteria" id="AAN50621">
    <property type="protein sequence ID" value="AAN50621"/>
    <property type="gene ID" value="LA_3423"/>
</dbReference>
<dbReference type="GeneID" id="61144090"/>
<dbReference type="KEGG" id="lil:LA_3423"/>
<dbReference type="PATRIC" id="fig|189518.3.peg.3388"/>
<dbReference type="HOGENOM" id="CLU_062853_0_0_12"/>
<dbReference type="InParanoid" id="Q8F0R9"/>
<dbReference type="OrthoDB" id="9803740at2"/>
<dbReference type="Proteomes" id="UP000001408">
    <property type="component" value="Chromosome I"/>
</dbReference>
<dbReference type="GO" id="GO:0015934">
    <property type="term" value="C:large ribosomal subunit"/>
    <property type="evidence" value="ECO:0007669"/>
    <property type="project" value="InterPro"/>
</dbReference>
<dbReference type="GO" id="GO:0019843">
    <property type="term" value="F:rRNA binding"/>
    <property type="evidence" value="ECO:0007669"/>
    <property type="project" value="UniProtKB-UniRule"/>
</dbReference>
<dbReference type="GO" id="GO:0003735">
    <property type="term" value="F:structural constituent of ribosome"/>
    <property type="evidence" value="ECO:0007669"/>
    <property type="project" value="InterPro"/>
</dbReference>
<dbReference type="GO" id="GO:0000049">
    <property type="term" value="F:tRNA binding"/>
    <property type="evidence" value="ECO:0007669"/>
    <property type="project" value="UniProtKB-KW"/>
</dbReference>
<dbReference type="GO" id="GO:0006417">
    <property type="term" value="P:regulation of translation"/>
    <property type="evidence" value="ECO:0007669"/>
    <property type="project" value="UniProtKB-KW"/>
</dbReference>
<dbReference type="GO" id="GO:0006412">
    <property type="term" value="P:translation"/>
    <property type="evidence" value="ECO:0007669"/>
    <property type="project" value="UniProtKB-UniRule"/>
</dbReference>
<dbReference type="CDD" id="cd00403">
    <property type="entry name" value="Ribosomal_L1"/>
    <property type="match status" value="1"/>
</dbReference>
<dbReference type="FunFam" id="3.40.50.790:FF:000001">
    <property type="entry name" value="50S ribosomal protein L1"/>
    <property type="match status" value="1"/>
</dbReference>
<dbReference type="Gene3D" id="3.30.190.20">
    <property type="match status" value="1"/>
</dbReference>
<dbReference type="Gene3D" id="3.40.50.790">
    <property type="match status" value="1"/>
</dbReference>
<dbReference type="HAMAP" id="MF_01318_B">
    <property type="entry name" value="Ribosomal_uL1_B"/>
    <property type="match status" value="1"/>
</dbReference>
<dbReference type="InterPro" id="IPR005878">
    <property type="entry name" value="Ribosom_uL1_bac-type"/>
</dbReference>
<dbReference type="InterPro" id="IPR002143">
    <property type="entry name" value="Ribosomal_uL1"/>
</dbReference>
<dbReference type="InterPro" id="IPR023674">
    <property type="entry name" value="Ribosomal_uL1-like"/>
</dbReference>
<dbReference type="InterPro" id="IPR028364">
    <property type="entry name" value="Ribosomal_uL1/biogenesis"/>
</dbReference>
<dbReference type="InterPro" id="IPR016095">
    <property type="entry name" value="Ribosomal_uL1_3-a/b-sand"/>
</dbReference>
<dbReference type="InterPro" id="IPR023673">
    <property type="entry name" value="Ribosomal_uL1_CS"/>
</dbReference>
<dbReference type="NCBIfam" id="TIGR01169">
    <property type="entry name" value="rplA_bact"/>
    <property type="match status" value="1"/>
</dbReference>
<dbReference type="PANTHER" id="PTHR36427">
    <property type="entry name" value="54S RIBOSOMAL PROTEIN L1, MITOCHONDRIAL"/>
    <property type="match status" value="1"/>
</dbReference>
<dbReference type="PANTHER" id="PTHR36427:SF3">
    <property type="entry name" value="LARGE RIBOSOMAL SUBUNIT PROTEIN UL1M"/>
    <property type="match status" value="1"/>
</dbReference>
<dbReference type="Pfam" id="PF00687">
    <property type="entry name" value="Ribosomal_L1"/>
    <property type="match status" value="1"/>
</dbReference>
<dbReference type="PIRSF" id="PIRSF002155">
    <property type="entry name" value="Ribosomal_L1"/>
    <property type="match status" value="1"/>
</dbReference>
<dbReference type="SUPFAM" id="SSF56808">
    <property type="entry name" value="Ribosomal protein L1"/>
    <property type="match status" value="1"/>
</dbReference>
<dbReference type="PROSITE" id="PS01199">
    <property type="entry name" value="RIBOSOMAL_L1"/>
    <property type="match status" value="1"/>
</dbReference>
<protein>
    <recommendedName>
        <fullName evidence="1">Large ribosomal subunit protein uL1</fullName>
    </recommendedName>
    <alternativeName>
        <fullName evidence="2">50S ribosomal protein L1</fullName>
    </alternativeName>
</protein>
<name>RL1_LEPIN</name>
<sequence>MQRGKKYRAHKEKVDSTKFFSIDKAVELAKSTSYTKFDGTLEIATKVNYKSLQNIRGTISLPHGTGKKIRVLVFCKGDKQNDAKAAGADFVGDTDLIEKVAGGWTDFDACVATPDMMKDVGKLGPILGRKGLMPKPKAGTVTTDVAKAVNELKAGRIEYRPDKGGVVHLGVGKVSFDNTKLIENIRTVVQTLMRDKPSDAKGEYLKTFSISPTMGVGVKVDVKELVNTSI</sequence>
<accession>Q8F0R9</accession>
<feature type="chain" id="PRO_0000125678" description="Large ribosomal subunit protein uL1">
    <location>
        <begin position="1"/>
        <end position="230"/>
    </location>
</feature>
<gene>
    <name evidence="1" type="primary">rplA</name>
    <name type="ordered locus">LA_3423</name>
</gene>
<keyword id="KW-1185">Reference proteome</keyword>
<keyword id="KW-0678">Repressor</keyword>
<keyword id="KW-0687">Ribonucleoprotein</keyword>
<keyword id="KW-0689">Ribosomal protein</keyword>
<keyword id="KW-0694">RNA-binding</keyword>
<keyword id="KW-0699">rRNA-binding</keyword>
<keyword id="KW-0810">Translation regulation</keyword>
<keyword id="KW-0820">tRNA-binding</keyword>
<proteinExistence type="inferred from homology"/>
<evidence type="ECO:0000255" key="1">
    <source>
        <dbReference type="HAMAP-Rule" id="MF_01318"/>
    </source>
</evidence>
<evidence type="ECO:0000305" key="2"/>
<reference key="1">
    <citation type="journal article" date="2003" name="Nature">
        <title>Unique physiological and pathogenic features of Leptospira interrogans revealed by whole-genome sequencing.</title>
        <authorList>
            <person name="Ren S.-X."/>
            <person name="Fu G."/>
            <person name="Jiang X.-G."/>
            <person name="Zeng R."/>
            <person name="Miao Y.-G."/>
            <person name="Xu H."/>
            <person name="Zhang Y.-X."/>
            <person name="Xiong H."/>
            <person name="Lu G."/>
            <person name="Lu L.-F."/>
            <person name="Jiang H.-Q."/>
            <person name="Jia J."/>
            <person name="Tu Y.-F."/>
            <person name="Jiang J.-X."/>
            <person name="Gu W.-Y."/>
            <person name="Zhang Y.-Q."/>
            <person name="Cai Z."/>
            <person name="Sheng H.-H."/>
            <person name="Yin H.-F."/>
            <person name="Zhang Y."/>
            <person name="Zhu G.-F."/>
            <person name="Wan M."/>
            <person name="Huang H.-L."/>
            <person name="Qian Z."/>
            <person name="Wang S.-Y."/>
            <person name="Ma W."/>
            <person name="Yao Z.-J."/>
            <person name="Shen Y."/>
            <person name="Qiang B.-Q."/>
            <person name="Xia Q.-C."/>
            <person name="Guo X.-K."/>
            <person name="Danchin A."/>
            <person name="Saint Girons I."/>
            <person name="Somerville R.L."/>
            <person name="Wen Y.-M."/>
            <person name="Shi M.-H."/>
            <person name="Chen Z."/>
            <person name="Xu J.-G."/>
            <person name="Zhao G.-P."/>
        </authorList>
    </citation>
    <scope>NUCLEOTIDE SEQUENCE [LARGE SCALE GENOMIC DNA]</scope>
    <source>
        <strain>56601</strain>
    </source>
</reference>
<organism>
    <name type="scientific">Leptospira interrogans serogroup Icterohaemorrhagiae serovar Lai (strain 56601)</name>
    <dbReference type="NCBI Taxonomy" id="189518"/>
    <lineage>
        <taxon>Bacteria</taxon>
        <taxon>Pseudomonadati</taxon>
        <taxon>Spirochaetota</taxon>
        <taxon>Spirochaetia</taxon>
        <taxon>Leptospirales</taxon>
        <taxon>Leptospiraceae</taxon>
        <taxon>Leptospira</taxon>
    </lineage>
</organism>